<gene>
    <name evidence="1" type="primary">proS</name>
    <name type="ordered locus">Pcryo_0463</name>
</gene>
<protein>
    <recommendedName>
        <fullName evidence="1">Proline--tRNA ligase</fullName>
        <ecNumber evidence="1">6.1.1.15</ecNumber>
    </recommendedName>
    <alternativeName>
        <fullName evidence="1">Prolyl-tRNA synthetase</fullName>
        <shortName evidence="1">ProRS</shortName>
    </alternativeName>
</protein>
<comment type="function">
    <text evidence="1">Catalyzes the attachment of proline to tRNA(Pro) in a two-step reaction: proline is first activated by ATP to form Pro-AMP and then transferred to the acceptor end of tRNA(Pro). As ProRS can inadvertently accommodate and process non-cognate amino acids such as alanine and cysteine, to avoid such errors it has two additional distinct editing activities against alanine. One activity is designated as 'pretransfer' editing and involves the tRNA(Pro)-independent hydrolysis of activated Ala-AMP. The other activity is designated 'posttransfer' editing and involves deacylation of mischarged Ala-tRNA(Pro). The misacylated Cys-tRNA(Pro) is not edited by ProRS.</text>
</comment>
<comment type="catalytic activity">
    <reaction evidence="1">
        <text>tRNA(Pro) + L-proline + ATP = L-prolyl-tRNA(Pro) + AMP + diphosphate</text>
        <dbReference type="Rhea" id="RHEA:14305"/>
        <dbReference type="Rhea" id="RHEA-COMP:9700"/>
        <dbReference type="Rhea" id="RHEA-COMP:9702"/>
        <dbReference type="ChEBI" id="CHEBI:30616"/>
        <dbReference type="ChEBI" id="CHEBI:33019"/>
        <dbReference type="ChEBI" id="CHEBI:60039"/>
        <dbReference type="ChEBI" id="CHEBI:78442"/>
        <dbReference type="ChEBI" id="CHEBI:78532"/>
        <dbReference type="ChEBI" id="CHEBI:456215"/>
        <dbReference type="EC" id="6.1.1.15"/>
    </reaction>
</comment>
<comment type="subunit">
    <text evidence="1">Homodimer.</text>
</comment>
<comment type="subcellular location">
    <subcellularLocation>
        <location evidence="1">Cytoplasm</location>
    </subcellularLocation>
</comment>
<comment type="domain">
    <text evidence="1">Consists of three domains: the N-terminal catalytic domain, the editing domain and the C-terminal anticodon-binding domain.</text>
</comment>
<comment type="similarity">
    <text evidence="1">Belongs to the class-II aminoacyl-tRNA synthetase family. ProS type 1 subfamily.</text>
</comment>
<reference key="1">
    <citation type="submission" date="2006-03" db="EMBL/GenBank/DDBJ databases">
        <title>Complete sequence of chromosome of Psychrobacter cryohalolentis K5.</title>
        <authorList>
            <consortium name="US DOE Joint Genome Institute"/>
            <person name="Copeland A."/>
            <person name="Lucas S."/>
            <person name="Lapidus A."/>
            <person name="Barry K."/>
            <person name="Detter J.C."/>
            <person name="Glavina T."/>
            <person name="Hammon N."/>
            <person name="Israni S."/>
            <person name="Dalin E."/>
            <person name="Tice H."/>
            <person name="Pitluck S."/>
            <person name="Brettin T."/>
            <person name="Bruce D."/>
            <person name="Han C."/>
            <person name="Tapia R."/>
            <person name="Sims D.R."/>
            <person name="Gilna P."/>
            <person name="Schmutz J."/>
            <person name="Larimer F."/>
            <person name="Land M."/>
            <person name="Hauser L."/>
            <person name="Kyrpides N."/>
            <person name="Kim E."/>
            <person name="Richardson P."/>
        </authorList>
    </citation>
    <scope>NUCLEOTIDE SEQUENCE [LARGE SCALE GENOMIC DNA]</scope>
    <source>
        <strain>ATCC BAA-1226 / DSM 17306 / VKM B-2378 / K5</strain>
    </source>
</reference>
<accession>Q1QDK7</accession>
<sequence length="572" mass="63765">MKASQFLFATLKETPSDADIASSQLMVRAGLIRKIASGLYIWLPMGLRVLQKVERIVREEMQNIGAQEVLMPMTQPAELWQLTGRFNDYGPELLRFKDRHDRDFVLGPTHEEVITNLAQGELRSYKQLPITFFQIQNKFRDEIRPRFGVMRAREFTMKDAYSFHVDQASLAKTYDEMYDAYTRIFTRLGLDFRAVQADTGSIGGFASHEFHVLADSGEDDIAFSDSSEYAANVELAESVSMAERQPATMARENIDTVNMPTCEAVAEHLNVPLATTVKTLIVQGHTPEGEPQLIAVVLRGDHTLNTIKAEKIEEANVPLMMATEEELKAAGLHKGYIGVELNMPVFVDRAAAALSDFVSGANEINKHTTGMNWERDAHITRIVDIRNVHEGDPSPDGKGTLQIKRGIEVGHIFQLGDKYSQAMNCTVSGEDGKPVTLMMGCYGIGVSRIIAAAIEQNNDENGIMWPSTPDISDSLAPFEVAIVPMKSKEDTVMETATALYEELKALGINVLLDDRNERPGVKFADLELIGIPHRIVVSDRNLAEDKYEYVNRRDSEKQLLSRDEVIAKVSGK</sequence>
<proteinExistence type="inferred from homology"/>
<organism>
    <name type="scientific">Psychrobacter cryohalolentis (strain ATCC BAA-1226 / DSM 17306 / VKM B-2378 / K5)</name>
    <dbReference type="NCBI Taxonomy" id="335284"/>
    <lineage>
        <taxon>Bacteria</taxon>
        <taxon>Pseudomonadati</taxon>
        <taxon>Pseudomonadota</taxon>
        <taxon>Gammaproteobacteria</taxon>
        <taxon>Moraxellales</taxon>
        <taxon>Moraxellaceae</taxon>
        <taxon>Psychrobacter</taxon>
    </lineage>
</organism>
<feature type="chain" id="PRO_0000248752" description="Proline--tRNA ligase">
    <location>
        <begin position="1"/>
        <end position="572"/>
    </location>
</feature>
<dbReference type="EC" id="6.1.1.15" evidence="1"/>
<dbReference type="EMBL" id="CP000323">
    <property type="protein sequence ID" value="ABE74246.1"/>
    <property type="molecule type" value="Genomic_DNA"/>
</dbReference>
<dbReference type="RefSeq" id="WP_011512831.1">
    <property type="nucleotide sequence ID" value="NC_007969.1"/>
</dbReference>
<dbReference type="SMR" id="Q1QDK7"/>
<dbReference type="STRING" id="335284.Pcryo_0463"/>
<dbReference type="KEGG" id="pcr:Pcryo_0463"/>
<dbReference type="eggNOG" id="COG0442">
    <property type="taxonomic scope" value="Bacteria"/>
</dbReference>
<dbReference type="HOGENOM" id="CLU_016739_0_0_6"/>
<dbReference type="Proteomes" id="UP000002425">
    <property type="component" value="Chromosome"/>
</dbReference>
<dbReference type="GO" id="GO:0005829">
    <property type="term" value="C:cytosol"/>
    <property type="evidence" value="ECO:0007669"/>
    <property type="project" value="TreeGrafter"/>
</dbReference>
<dbReference type="GO" id="GO:0002161">
    <property type="term" value="F:aminoacyl-tRNA deacylase activity"/>
    <property type="evidence" value="ECO:0007669"/>
    <property type="project" value="InterPro"/>
</dbReference>
<dbReference type="GO" id="GO:0005524">
    <property type="term" value="F:ATP binding"/>
    <property type="evidence" value="ECO:0007669"/>
    <property type="project" value="UniProtKB-UniRule"/>
</dbReference>
<dbReference type="GO" id="GO:0004827">
    <property type="term" value="F:proline-tRNA ligase activity"/>
    <property type="evidence" value="ECO:0007669"/>
    <property type="project" value="UniProtKB-UniRule"/>
</dbReference>
<dbReference type="GO" id="GO:0006433">
    <property type="term" value="P:prolyl-tRNA aminoacylation"/>
    <property type="evidence" value="ECO:0007669"/>
    <property type="project" value="UniProtKB-UniRule"/>
</dbReference>
<dbReference type="CDD" id="cd04334">
    <property type="entry name" value="ProRS-INS"/>
    <property type="match status" value="1"/>
</dbReference>
<dbReference type="CDD" id="cd00861">
    <property type="entry name" value="ProRS_anticodon_short"/>
    <property type="match status" value="1"/>
</dbReference>
<dbReference type="CDD" id="cd00779">
    <property type="entry name" value="ProRS_core_prok"/>
    <property type="match status" value="1"/>
</dbReference>
<dbReference type="FunFam" id="3.30.930.10:FF:000012">
    <property type="entry name" value="Proline--tRNA ligase"/>
    <property type="match status" value="1"/>
</dbReference>
<dbReference type="FunFam" id="3.30.930.10:FF:000097">
    <property type="entry name" value="Proline--tRNA ligase"/>
    <property type="match status" value="1"/>
</dbReference>
<dbReference type="Gene3D" id="3.40.50.800">
    <property type="entry name" value="Anticodon-binding domain"/>
    <property type="match status" value="1"/>
</dbReference>
<dbReference type="Gene3D" id="3.30.930.10">
    <property type="entry name" value="Bira Bifunctional Protein, Domain 2"/>
    <property type="match status" value="2"/>
</dbReference>
<dbReference type="HAMAP" id="MF_01569">
    <property type="entry name" value="Pro_tRNA_synth_type1"/>
    <property type="match status" value="1"/>
</dbReference>
<dbReference type="InterPro" id="IPR002314">
    <property type="entry name" value="aa-tRNA-synt_IIb"/>
</dbReference>
<dbReference type="InterPro" id="IPR006195">
    <property type="entry name" value="aa-tRNA-synth_II"/>
</dbReference>
<dbReference type="InterPro" id="IPR045864">
    <property type="entry name" value="aa-tRNA-synth_II/BPL/LPL"/>
</dbReference>
<dbReference type="InterPro" id="IPR004154">
    <property type="entry name" value="Anticodon-bd"/>
</dbReference>
<dbReference type="InterPro" id="IPR036621">
    <property type="entry name" value="Anticodon-bd_dom_sf"/>
</dbReference>
<dbReference type="InterPro" id="IPR002316">
    <property type="entry name" value="Pro-tRNA-ligase_IIa"/>
</dbReference>
<dbReference type="InterPro" id="IPR004500">
    <property type="entry name" value="Pro-tRNA-synth_IIa_bac-type"/>
</dbReference>
<dbReference type="InterPro" id="IPR023717">
    <property type="entry name" value="Pro-tRNA-Synthase_IIa_type1"/>
</dbReference>
<dbReference type="InterPro" id="IPR050062">
    <property type="entry name" value="Pro-tRNA_synthetase"/>
</dbReference>
<dbReference type="InterPro" id="IPR044140">
    <property type="entry name" value="ProRS_anticodon_short"/>
</dbReference>
<dbReference type="InterPro" id="IPR033730">
    <property type="entry name" value="ProRS_core_prok"/>
</dbReference>
<dbReference type="InterPro" id="IPR036754">
    <property type="entry name" value="YbaK/aa-tRNA-synt-asso_dom_sf"/>
</dbReference>
<dbReference type="InterPro" id="IPR007214">
    <property type="entry name" value="YbaK/aa-tRNA-synth-assoc-dom"/>
</dbReference>
<dbReference type="NCBIfam" id="NF006625">
    <property type="entry name" value="PRK09194.1"/>
    <property type="match status" value="1"/>
</dbReference>
<dbReference type="NCBIfam" id="TIGR00409">
    <property type="entry name" value="proS_fam_II"/>
    <property type="match status" value="1"/>
</dbReference>
<dbReference type="PANTHER" id="PTHR42753">
    <property type="entry name" value="MITOCHONDRIAL RIBOSOME PROTEIN L39/PROLYL-TRNA LIGASE FAMILY MEMBER"/>
    <property type="match status" value="1"/>
</dbReference>
<dbReference type="PANTHER" id="PTHR42753:SF2">
    <property type="entry name" value="PROLINE--TRNA LIGASE"/>
    <property type="match status" value="1"/>
</dbReference>
<dbReference type="Pfam" id="PF03129">
    <property type="entry name" value="HGTP_anticodon"/>
    <property type="match status" value="1"/>
</dbReference>
<dbReference type="Pfam" id="PF00587">
    <property type="entry name" value="tRNA-synt_2b"/>
    <property type="match status" value="1"/>
</dbReference>
<dbReference type="Pfam" id="PF04073">
    <property type="entry name" value="tRNA_edit"/>
    <property type="match status" value="1"/>
</dbReference>
<dbReference type="PRINTS" id="PR01046">
    <property type="entry name" value="TRNASYNTHPRO"/>
</dbReference>
<dbReference type="SUPFAM" id="SSF52954">
    <property type="entry name" value="Class II aaRS ABD-related"/>
    <property type="match status" value="1"/>
</dbReference>
<dbReference type="SUPFAM" id="SSF55681">
    <property type="entry name" value="Class II aaRS and biotin synthetases"/>
    <property type="match status" value="1"/>
</dbReference>
<dbReference type="SUPFAM" id="SSF55826">
    <property type="entry name" value="YbaK/ProRS associated domain"/>
    <property type="match status" value="1"/>
</dbReference>
<dbReference type="PROSITE" id="PS50862">
    <property type="entry name" value="AA_TRNA_LIGASE_II"/>
    <property type="match status" value="1"/>
</dbReference>
<keyword id="KW-0030">Aminoacyl-tRNA synthetase</keyword>
<keyword id="KW-0067">ATP-binding</keyword>
<keyword id="KW-0963">Cytoplasm</keyword>
<keyword id="KW-0436">Ligase</keyword>
<keyword id="KW-0547">Nucleotide-binding</keyword>
<keyword id="KW-0648">Protein biosynthesis</keyword>
<evidence type="ECO:0000255" key="1">
    <source>
        <dbReference type="HAMAP-Rule" id="MF_01569"/>
    </source>
</evidence>
<name>SYP_PSYCK</name>